<name>YIHI_HAEIN</name>
<sequence>MARKKKTRRITDIMPIRKADKKIDITKARSGKKLTCYELDAKAREDKKKRKHKGLASGSRHSAVEEKANKLQNEIKDPKIGSKKKIPLVVEFVNKPEKGQVIPVIKQVKKQDPMKELENLENNEILNELLDALDAGKTISKSDQQFVDECLDRISELMEELGIEDEDESEDDLYRTFERMDINQFR</sequence>
<evidence type="ECO:0000255" key="1">
    <source>
        <dbReference type="HAMAP-Rule" id="MF_01058"/>
    </source>
</evidence>
<evidence type="ECO:0000256" key="2">
    <source>
        <dbReference type="SAM" id="MobiDB-lite"/>
    </source>
</evidence>
<reference key="1">
    <citation type="journal article" date="1995" name="Science">
        <title>Whole-genome random sequencing and assembly of Haemophilus influenzae Rd.</title>
        <authorList>
            <person name="Fleischmann R.D."/>
            <person name="Adams M.D."/>
            <person name="White O."/>
            <person name="Clayton R.A."/>
            <person name="Kirkness E.F."/>
            <person name="Kerlavage A.R."/>
            <person name="Bult C.J."/>
            <person name="Tomb J.-F."/>
            <person name="Dougherty B.A."/>
            <person name="Merrick J.M."/>
            <person name="McKenney K."/>
            <person name="Sutton G.G."/>
            <person name="FitzHugh W."/>
            <person name="Fields C.A."/>
            <person name="Gocayne J.D."/>
            <person name="Scott J.D."/>
            <person name="Shirley R."/>
            <person name="Liu L.-I."/>
            <person name="Glodek A."/>
            <person name="Kelley J.M."/>
            <person name="Weidman J.F."/>
            <person name="Phillips C.A."/>
            <person name="Spriggs T."/>
            <person name="Hedblom E."/>
            <person name="Cotton M.D."/>
            <person name="Utterback T.R."/>
            <person name="Hanna M.C."/>
            <person name="Nguyen D.T."/>
            <person name="Saudek D.M."/>
            <person name="Brandon R.C."/>
            <person name="Fine L.D."/>
            <person name="Fritchman J.L."/>
            <person name="Fuhrmann J.L."/>
            <person name="Geoghagen N.S.M."/>
            <person name="Gnehm C.L."/>
            <person name="McDonald L.A."/>
            <person name="Small K.V."/>
            <person name="Fraser C.M."/>
            <person name="Smith H.O."/>
            <person name="Venter J.C."/>
        </authorList>
    </citation>
    <scope>NUCLEOTIDE SEQUENCE [LARGE SCALE GENOMIC DNA]</scope>
    <source>
        <strain>ATCC 51907 / DSM 11121 / KW20 / Rd</strain>
    </source>
</reference>
<feature type="chain" id="PRO_0000209586" description="Der GTPase-activating protein YihI">
    <location>
        <begin position="1"/>
        <end position="186"/>
    </location>
</feature>
<feature type="region of interest" description="Disordered" evidence="2">
    <location>
        <begin position="42"/>
        <end position="77"/>
    </location>
</feature>
<feature type="compositionally biased region" description="Basic and acidic residues" evidence="2">
    <location>
        <begin position="62"/>
        <end position="77"/>
    </location>
</feature>
<dbReference type="EMBL" id="L42023">
    <property type="protein sequence ID" value="AAC22382.1"/>
    <property type="molecule type" value="Genomic_DNA"/>
</dbReference>
<dbReference type="PIR" id="F64157">
    <property type="entry name" value="F64157"/>
</dbReference>
<dbReference type="RefSeq" id="NP_438882.1">
    <property type="nucleotide sequence ID" value="NC_000907.1"/>
</dbReference>
<dbReference type="SMR" id="P44844"/>
<dbReference type="STRING" id="71421.HI_0724"/>
<dbReference type="EnsemblBacteria" id="AAC22382">
    <property type="protein sequence ID" value="AAC22382"/>
    <property type="gene ID" value="HI_0724"/>
</dbReference>
<dbReference type="KEGG" id="hin:HI_0724"/>
<dbReference type="PATRIC" id="fig|71421.8.peg.756"/>
<dbReference type="eggNOG" id="COG3078">
    <property type="taxonomic scope" value="Bacteria"/>
</dbReference>
<dbReference type="HOGENOM" id="CLU_094104_2_0_6"/>
<dbReference type="OrthoDB" id="5677577at2"/>
<dbReference type="BioCyc" id="HINF71421:G1GJ1-763-MONOMER"/>
<dbReference type="Proteomes" id="UP000000579">
    <property type="component" value="Chromosome"/>
</dbReference>
<dbReference type="GO" id="GO:0005096">
    <property type="term" value="F:GTPase activator activity"/>
    <property type="evidence" value="ECO:0007669"/>
    <property type="project" value="UniProtKB-KW"/>
</dbReference>
<dbReference type="GO" id="GO:0042254">
    <property type="term" value="P:ribosome biogenesis"/>
    <property type="evidence" value="ECO:0007669"/>
    <property type="project" value="UniProtKB-KW"/>
</dbReference>
<dbReference type="HAMAP" id="MF_01058">
    <property type="entry name" value="GAP_YihI"/>
    <property type="match status" value="1"/>
</dbReference>
<dbReference type="InterPro" id="IPR007336">
    <property type="entry name" value="YihI"/>
</dbReference>
<dbReference type="NCBIfam" id="NF003560">
    <property type="entry name" value="PRK05244.1-1"/>
    <property type="match status" value="1"/>
</dbReference>
<dbReference type="Pfam" id="PF04220">
    <property type="entry name" value="YihI"/>
    <property type="match status" value="1"/>
</dbReference>
<keyword id="KW-0343">GTPase activation</keyword>
<keyword id="KW-1185">Reference proteome</keyword>
<keyword id="KW-0690">Ribosome biogenesis</keyword>
<gene>
    <name evidence="1" type="primary">yihI</name>
    <name type="ordered locus">HI_0724</name>
</gene>
<proteinExistence type="inferred from homology"/>
<organism>
    <name type="scientific">Haemophilus influenzae (strain ATCC 51907 / DSM 11121 / KW20 / Rd)</name>
    <dbReference type="NCBI Taxonomy" id="71421"/>
    <lineage>
        <taxon>Bacteria</taxon>
        <taxon>Pseudomonadati</taxon>
        <taxon>Pseudomonadota</taxon>
        <taxon>Gammaproteobacteria</taxon>
        <taxon>Pasteurellales</taxon>
        <taxon>Pasteurellaceae</taxon>
        <taxon>Haemophilus</taxon>
    </lineage>
</organism>
<accession>P44844</accession>
<comment type="function">
    <text evidence="1">A GTPase-activating protein (GAP) that modifies Der/EngA GTPase function. May play a role in ribosome biogenesis.</text>
</comment>
<comment type="subunit">
    <text evidence="1">Interacts with Der.</text>
</comment>
<comment type="similarity">
    <text evidence="1">Belongs to the YihI family.</text>
</comment>
<protein>
    <recommendedName>
        <fullName evidence="1">Der GTPase-activating protein YihI</fullName>
    </recommendedName>
</protein>